<keyword id="KW-0963">Cytoplasm</keyword>
<keyword id="KW-0227">DNA damage</keyword>
<keyword id="KW-0233">DNA recombination</keyword>
<keyword id="KW-0234">DNA repair</keyword>
<keyword id="KW-0238">DNA-binding</keyword>
<keyword id="KW-0742">SOS response</keyword>
<organism>
    <name type="scientific">Escherichia fergusonii (strain ATCC 35469 / DSM 13698 / CCUG 18766 / IAM 14443 / JCM 21226 / LMG 7866 / NBRC 102419 / NCTC 12128 / CDC 0568-73)</name>
    <dbReference type="NCBI Taxonomy" id="585054"/>
    <lineage>
        <taxon>Bacteria</taxon>
        <taxon>Pseudomonadati</taxon>
        <taxon>Pseudomonadota</taxon>
        <taxon>Gammaproteobacteria</taxon>
        <taxon>Enterobacterales</taxon>
        <taxon>Enterobacteriaceae</taxon>
        <taxon>Escherichia</taxon>
    </lineage>
</organism>
<accession>B7LPI3</accession>
<dbReference type="EMBL" id="CU928158">
    <property type="protein sequence ID" value="CAQ88736.1"/>
    <property type="molecule type" value="Genomic_DNA"/>
</dbReference>
<dbReference type="RefSeq" id="WP_000580322.1">
    <property type="nucleotide sequence ID" value="NC_011740.1"/>
</dbReference>
<dbReference type="SMR" id="B7LPI3"/>
<dbReference type="KEGG" id="efe:EFER_1211"/>
<dbReference type="HOGENOM" id="CLU_087936_0_0_6"/>
<dbReference type="OrthoDB" id="5293449at2"/>
<dbReference type="Proteomes" id="UP000000745">
    <property type="component" value="Chromosome"/>
</dbReference>
<dbReference type="GO" id="GO:0005737">
    <property type="term" value="C:cytoplasm"/>
    <property type="evidence" value="ECO:0007669"/>
    <property type="project" value="UniProtKB-SubCell"/>
</dbReference>
<dbReference type="GO" id="GO:0009379">
    <property type="term" value="C:Holliday junction helicase complex"/>
    <property type="evidence" value="ECO:0007669"/>
    <property type="project" value="InterPro"/>
</dbReference>
<dbReference type="GO" id="GO:0048476">
    <property type="term" value="C:Holliday junction resolvase complex"/>
    <property type="evidence" value="ECO:0007669"/>
    <property type="project" value="UniProtKB-UniRule"/>
</dbReference>
<dbReference type="GO" id="GO:0005524">
    <property type="term" value="F:ATP binding"/>
    <property type="evidence" value="ECO:0007669"/>
    <property type="project" value="InterPro"/>
</dbReference>
<dbReference type="GO" id="GO:0000400">
    <property type="term" value="F:four-way junction DNA binding"/>
    <property type="evidence" value="ECO:0007669"/>
    <property type="project" value="UniProtKB-UniRule"/>
</dbReference>
<dbReference type="GO" id="GO:0009378">
    <property type="term" value="F:four-way junction helicase activity"/>
    <property type="evidence" value="ECO:0007669"/>
    <property type="project" value="InterPro"/>
</dbReference>
<dbReference type="GO" id="GO:0006310">
    <property type="term" value="P:DNA recombination"/>
    <property type="evidence" value="ECO:0007669"/>
    <property type="project" value="UniProtKB-UniRule"/>
</dbReference>
<dbReference type="GO" id="GO:0006281">
    <property type="term" value="P:DNA repair"/>
    <property type="evidence" value="ECO:0007669"/>
    <property type="project" value="UniProtKB-UniRule"/>
</dbReference>
<dbReference type="GO" id="GO:0009432">
    <property type="term" value="P:SOS response"/>
    <property type="evidence" value="ECO:0007669"/>
    <property type="project" value="UniProtKB-UniRule"/>
</dbReference>
<dbReference type="CDD" id="cd14332">
    <property type="entry name" value="UBA_RuvA_C"/>
    <property type="match status" value="1"/>
</dbReference>
<dbReference type="FunFam" id="1.10.150.20:FF:000012">
    <property type="entry name" value="Holliday junction ATP-dependent DNA helicase RuvA"/>
    <property type="match status" value="1"/>
</dbReference>
<dbReference type="FunFam" id="1.10.8.10:FF:000008">
    <property type="entry name" value="Holliday junction ATP-dependent DNA helicase RuvA"/>
    <property type="match status" value="1"/>
</dbReference>
<dbReference type="FunFam" id="2.40.50.140:FF:000083">
    <property type="entry name" value="Holliday junction ATP-dependent DNA helicase RuvA"/>
    <property type="match status" value="1"/>
</dbReference>
<dbReference type="Gene3D" id="1.10.150.20">
    <property type="entry name" value="5' to 3' exonuclease, C-terminal subdomain"/>
    <property type="match status" value="1"/>
</dbReference>
<dbReference type="Gene3D" id="1.10.8.10">
    <property type="entry name" value="DNA helicase RuvA subunit, C-terminal domain"/>
    <property type="match status" value="1"/>
</dbReference>
<dbReference type="Gene3D" id="2.40.50.140">
    <property type="entry name" value="Nucleic acid-binding proteins"/>
    <property type="match status" value="1"/>
</dbReference>
<dbReference type="HAMAP" id="MF_00031">
    <property type="entry name" value="DNA_HJ_migration_RuvA"/>
    <property type="match status" value="1"/>
</dbReference>
<dbReference type="InterPro" id="IPR013849">
    <property type="entry name" value="DNA_helicase_Holl-junc_RuvA_I"/>
</dbReference>
<dbReference type="InterPro" id="IPR003583">
    <property type="entry name" value="Hlx-hairpin-Hlx_DNA-bd_motif"/>
</dbReference>
<dbReference type="InterPro" id="IPR012340">
    <property type="entry name" value="NA-bd_OB-fold"/>
</dbReference>
<dbReference type="InterPro" id="IPR000085">
    <property type="entry name" value="RuvA"/>
</dbReference>
<dbReference type="InterPro" id="IPR010994">
    <property type="entry name" value="RuvA_2-like"/>
</dbReference>
<dbReference type="InterPro" id="IPR011114">
    <property type="entry name" value="RuvA_C"/>
</dbReference>
<dbReference type="InterPro" id="IPR036267">
    <property type="entry name" value="RuvA_C_sf"/>
</dbReference>
<dbReference type="NCBIfam" id="TIGR00084">
    <property type="entry name" value="ruvA"/>
    <property type="match status" value="1"/>
</dbReference>
<dbReference type="Pfam" id="PF14520">
    <property type="entry name" value="HHH_5"/>
    <property type="match status" value="1"/>
</dbReference>
<dbReference type="Pfam" id="PF07499">
    <property type="entry name" value="RuvA_C"/>
    <property type="match status" value="1"/>
</dbReference>
<dbReference type="Pfam" id="PF01330">
    <property type="entry name" value="RuvA_N"/>
    <property type="match status" value="1"/>
</dbReference>
<dbReference type="SMART" id="SM00278">
    <property type="entry name" value="HhH1"/>
    <property type="match status" value="2"/>
</dbReference>
<dbReference type="SUPFAM" id="SSF46929">
    <property type="entry name" value="DNA helicase RuvA subunit, C-terminal domain"/>
    <property type="match status" value="1"/>
</dbReference>
<dbReference type="SUPFAM" id="SSF50249">
    <property type="entry name" value="Nucleic acid-binding proteins"/>
    <property type="match status" value="1"/>
</dbReference>
<dbReference type="SUPFAM" id="SSF47781">
    <property type="entry name" value="RuvA domain 2-like"/>
    <property type="match status" value="1"/>
</dbReference>
<name>RUVA_ESCF3</name>
<feature type="chain" id="PRO_1000195147" description="Holliday junction branch migration complex subunit RuvA">
    <location>
        <begin position="1"/>
        <end position="203"/>
    </location>
</feature>
<feature type="region of interest" description="Domain I" evidence="1">
    <location>
        <begin position="1"/>
        <end position="64"/>
    </location>
</feature>
<feature type="region of interest" description="Domain II" evidence="1">
    <location>
        <begin position="65"/>
        <end position="142"/>
    </location>
</feature>
<feature type="region of interest" description="Flexible linker" evidence="1">
    <location>
        <begin position="143"/>
        <end position="154"/>
    </location>
</feature>
<feature type="region of interest" description="Domain III" evidence="1">
    <location>
        <begin position="155"/>
        <end position="203"/>
    </location>
</feature>
<sequence length="203" mass="22067">MIGRLRGIIIEKQPPLVLIEVGGVGYEVHMPMTCFYELPEAGQEAIVFTHFVVREDAQLLYGFNNKQERTLFKELIKTNGVGPKLALAILSGMSAQQFVNAVEREEVGALVKLPGIGKKTAERLIVEMKDRFKGLHGDLFTPAADLVLTSPASPATDDAEQEAVAALVALGYKPQEASRMVSKIARPDASSETLIREALHAAL</sequence>
<proteinExistence type="inferred from homology"/>
<gene>
    <name evidence="1" type="primary">ruvA</name>
    <name type="ordered locus">EFER_1211</name>
</gene>
<comment type="function">
    <text evidence="1">The RuvA-RuvB-RuvC complex processes Holliday junction (HJ) DNA during genetic recombination and DNA repair, while the RuvA-RuvB complex plays an important role in the rescue of blocked DNA replication forks via replication fork reversal (RFR). RuvA specifically binds to HJ cruciform DNA, conferring on it an open structure. The RuvB hexamer acts as an ATP-dependent pump, pulling dsDNA into and through the RuvAB complex. HJ branch migration allows RuvC to scan DNA until it finds its consensus sequence, where it cleaves and resolves the cruciform DNA.</text>
</comment>
<comment type="subunit">
    <text evidence="1">Homotetramer. Forms an RuvA(8)-RuvB(12)-Holliday junction (HJ) complex. HJ DNA is sandwiched between 2 RuvA tetramers; dsDNA enters through RuvA and exits via RuvB. An RuvB hexamer assembles on each DNA strand where it exits the tetramer. Each RuvB hexamer is contacted by two RuvA subunits (via domain III) on 2 adjacent RuvB subunits; this complex drives branch migration. In the full resolvosome a probable DNA-RuvA(4)-RuvB(12)-RuvC(2) complex forms which resolves the HJ.</text>
</comment>
<comment type="subcellular location">
    <subcellularLocation>
        <location evidence="1">Cytoplasm</location>
    </subcellularLocation>
</comment>
<comment type="domain">
    <text evidence="1">Has three domains with a flexible linker between the domains II and III and assumes an 'L' shape. Domain III is highly mobile and contacts RuvB.</text>
</comment>
<comment type="similarity">
    <text evidence="1">Belongs to the RuvA family.</text>
</comment>
<evidence type="ECO:0000255" key="1">
    <source>
        <dbReference type="HAMAP-Rule" id="MF_00031"/>
    </source>
</evidence>
<reference key="1">
    <citation type="journal article" date="2009" name="PLoS Genet.">
        <title>Organised genome dynamics in the Escherichia coli species results in highly diverse adaptive paths.</title>
        <authorList>
            <person name="Touchon M."/>
            <person name="Hoede C."/>
            <person name="Tenaillon O."/>
            <person name="Barbe V."/>
            <person name="Baeriswyl S."/>
            <person name="Bidet P."/>
            <person name="Bingen E."/>
            <person name="Bonacorsi S."/>
            <person name="Bouchier C."/>
            <person name="Bouvet O."/>
            <person name="Calteau A."/>
            <person name="Chiapello H."/>
            <person name="Clermont O."/>
            <person name="Cruveiller S."/>
            <person name="Danchin A."/>
            <person name="Diard M."/>
            <person name="Dossat C."/>
            <person name="Karoui M.E."/>
            <person name="Frapy E."/>
            <person name="Garry L."/>
            <person name="Ghigo J.M."/>
            <person name="Gilles A.M."/>
            <person name="Johnson J."/>
            <person name="Le Bouguenec C."/>
            <person name="Lescat M."/>
            <person name="Mangenot S."/>
            <person name="Martinez-Jehanne V."/>
            <person name="Matic I."/>
            <person name="Nassif X."/>
            <person name="Oztas S."/>
            <person name="Petit M.A."/>
            <person name="Pichon C."/>
            <person name="Rouy Z."/>
            <person name="Ruf C.S."/>
            <person name="Schneider D."/>
            <person name="Tourret J."/>
            <person name="Vacherie B."/>
            <person name="Vallenet D."/>
            <person name="Medigue C."/>
            <person name="Rocha E.P.C."/>
            <person name="Denamur E."/>
        </authorList>
    </citation>
    <scope>NUCLEOTIDE SEQUENCE [LARGE SCALE GENOMIC DNA]</scope>
    <source>
        <strain>ATCC 35469 / DSM 13698 / BCRC 15582 / CCUG 18766 / IAM 14443 / JCM 21226 / LMG 7866 / NBRC 102419 / NCTC 12128 / CDC 0568-73</strain>
    </source>
</reference>
<protein>
    <recommendedName>
        <fullName evidence="1">Holliday junction branch migration complex subunit RuvA</fullName>
    </recommendedName>
</protein>